<dbReference type="EMBL" id="AE016827">
    <property type="protein sequence ID" value="AAU38363.1"/>
    <property type="molecule type" value="Genomic_DNA"/>
</dbReference>
<dbReference type="SMR" id="Q65RP7"/>
<dbReference type="STRING" id="221988.MS1756"/>
<dbReference type="KEGG" id="msu:MS1756"/>
<dbReference type="eggNOG" id="COG0268">
    <property type="taxonomic scope" value="Bacteria"/>
</dbReference>
<dbReference type="HOGENOM" id="CLU_160655_4_0_6"/>
<dbReference type="Proteomes" id="UP000000607">
    <property type="component" value="Chromosome"/>
</dbReference>
<dbReference type="GO" id="GO:0005829">
    <property type="term" value="C:cytosol"/>
    <property type="evidence" value="ECO:0007669"/>
    <property type="project" value="TreeGrafter"/>
</dbReference>
<dbReference type="GO" id="GO:0015935">
    <property type="term" value="C:small ribosomal subunit"/>
    <property type="evidence" value="ECO:0007669"/>
    <property type="project" value="TreeGrafter"/>
</dbReference>
<dbReference type="GO" id="GO:0070181">
    <property type="term" value="F:small ribosomal subunit rRNA binding"/>
    <property type="evidence" value="ECO:0007669"/>
    <property type="project" value="TreeGrafter"/>
</dbReference>
<dbReference type="GO" id="GO:0003735">
    <property type="term" value="F:structural constituent of ribosome"/>
    <property type="evidence" value="ECO:0007669"/>
    <property type="project" value="InterPro"/>
</dbReference>
<dbReference type="GO" id="GO:0006412">
    <property type="term" value="P:translation"/>
    <property type="evidence" value="ECO:0007669"/>
    <property type="project" value="UniProtKB-UniRule"/>
</dbReference>
<dbReference type="FunFam" id="1.20.58.110:FF:000001">
    <property type="entry name" value="30S ribosomal protein S20"/>
    <property type="match status" value="1"/>
</dbReference>
<dbReference type="Gene3D" id="1.20.58.110">
    <property type="entry name" value="Ribosomal protein S20"/>
    <property type="match status" value="1"/>
</dbReference>
<dbReference type="HAMAP" id="MF_00500">
    <property type="entry name" value="Ribosomal_bS20"/>
    <property type="match status" value="1"/>
</dbReference>
<dbReference type="InterPro" id="IPR002583">
    <property type="entry name" value="Ribosomal_bS20"/>
</dbReference>
<dbReference type="InterPro" id="IPR036510">
    <property type="entry name" value="Ribosomal_bS20_sf"/>
</dbReference>
<dbReference type="NCBIfam" id="TIGR00029">
    <property type="entry name" value="S20"/>
    <property type="match status" value="1"/>
</dbReference>
<dbReference type="PANTHER" id="PTHR33398">
    <property type="entry name" value="30S RIBOSOMAL PROTEIN S20"/>
    <property type="match status" value="1"/>
</dbReference>
<dbReference type="PANTHER" id="PTHR33398:SF1">
    <property type="entry name" value="SMALL RIBOSOMAL SUBUNIT PROTEIN BS20C"/>
    <property type="match status" value="1"/>
</dbReference>
<dbReference type="Pfam" id="PF01649">
    <property type="entry name" value="Ribosomal_S20p"/>
    <property type="match status" value="1"/>
</dbReference>
<dbReference type="SUPFAM" id="SSF46992">
    <property type="entry name" value="Ribosomal protein S20"/>
    <property type="match status" value="1"/>
</dbReference>
<proteinExistence type="inferred from homology"/>
<protein>
    <recommendedName>
        <fullName evidence="1">Small ribosomal subunit protein bS20</fullName>
    </recommendedName>
    <alternativeName>
        <fullName evidence="3">30S ribosomal protein S20</fullName>
    </alternativeName>
</protein>
<comment type="function">
    <text evidence="1">Binds directly to 16S ribosomal RNA.</text>
</comment>
<comment type="similarity">
    <text evidence="1">Belongs to the bacterial ribosomal protein bS20 family.</text>
</comment>
<sequence length="89" mass="9738">MTLANIKSAKKRAVQSEKSRQHNASQRSMMRTYIKKVYAAVAAGEKAAAQAAFVEMQKVVDRMASKGLIHANKAANHKSKLVAQIKKLA</sequence>
<keyword id="KW-0687">Ribonucleoprotein</keyword>
<keyword id="KW-0689">Ribosomal protein</keyword>
<keyword id="KW-0694">RNA-binding</keyword>
<keyword id="KW-0699">rRNA-binding</keyword>
<organism>
    <name type="scientific">Mannheimia succiniciproducens (strain KCTC 0769BP / MBEL55E)</name>
    <dbReference type="NCBI Taxonomy" id="221988"/>
    <lineage>
        <taxon>Bacteria</taxon>
        <taxon>Pseudomonadati</taxon>
        <taxon>Pseudomonadota</taxon>
        <taxon>Gammaproteobacteria</taxon>
        <taxon>Pasteurellales</taxon>
        <taxon>Pasteurellaceae</taxon>
        <taxon>Basfia</taxon>
    </lineage>
</organism>
<reference key="1">
    <citation type="journal article" date="2004" name="Nat. Biotechnol.">
        <title>The genome sequence of the capnophilic rumen bacterium Mannheimia succiniciproducens.</title>
        <authorList>
            <person name="Hong S.H."/>
            <person name="Kim J.S."/>
            <person name="Lee S.Y."/>
            <person name="In Y.H."/>
            <person name="Choi S.S."/>
            <person name="Rih J.-K."/>
            <person name="Kim C.H."/>
            <person name="Jeong H."/>
            <person name="Hur C.G."/>
            <person name="Kim J.J."/>
        </authorList>
    </citation>
    <scope>NUCLEOTIDE SEQUENCE [LARGE SCALE GENOMIC DNA]</scope>
    <source>
        <strain>KCTC 0769BP / MBEL55E</strain>
    </source>
</reference>
<feature type="chain" id="PRO_0000167987" description="Small ribosomal subunit protein bS20">
    <location>
        <begin position="1"/>
        <end position="89"/>
    </location>
</feature>
<feature type="region of interest" description="Disordered" evidence="2">
    <location>
        <begin position="1"/>
        <end position="28"/>
    </location>
</feature>
<accession>Q65RP7</accession>
<evidence type="ECO:0000255" key="1">
    <source>
        <dbReference type="HAMAP-Rule" id="MF_00500"/>
    </source>
</evidence>
<evidence type="ECO:0000256" key="2">
    <source>
        <dbReference type="SAM" id="MobiDB-lite"/>
    </source>
</evidence>
<evidence type="ECO:0000305" key="3"/>
<name>RS20_MANSM</name>
<gene>
    <name evidence="1" type="primary">rpsT</name>
    <name type="ordered locus">MS1756</name>
</gene>